<comment type="function">
    <text evidence="3 10">Component of the outer cell wall layer. Required for stability of the cell wall and for optimal growth. Required for resistance against several antifungal and cell wall-perturbing agents.</text>
</comment>
<comment type="subcellular location">
    <subcellularLocation>
        <location evidence="4 7 11 15 16">Secreted</location>
        <location evidence="4 7 11 15 16">Cell wall</location>
    </subcellularLocation>
    <text>Covalently attached to the cell wall. Localizes predominantly on the surface of growing buds.</text>
</comment>
<comment type="induction">
    <text evidence="5 9 13">Positively regulated by signaling through MPK1 in response to cell wall perturbation.</text>
</comment>
<comment type="domain">
    <text>The PIR1/2/3 repeat is required for the covalent linkage to the cell wall.</text>
</comment>
<comment type="PTM">
    <text>Covalently linked to beta-1,3-glucan of the inner cell wall layer via an alkali-sensitive ester linkage between the gamma-carboxyl group of glutamic acid, arising from Gln-74 within the PIR1/2/3 repeat, and hydroxyl groups of glucoses of beta-1,3-glucan chains.</text>
</comment>
<comment type="PTM">
    <text evidence="6 12 14 15">Extensively O-mannosylated. Also N-glycosylated.</text>
</comment>
<comment type="miscellaneous">
    <text evidence="8">Present with 12500 molecules/cell in log phase SD medium.</text>
</comment>
<comment type="similarity">
    <text evidence="17">Belongs to the PIR protein family.</text>
</comment>
<name>CIS3_YEAST</name>
<keyword id="KW-0134">Cell wall</keyword>
<keyword id="KW-0961">Cell wall biogenesis/degradation</keyword>
<keyword id="KW-0165">Cleavage on pair of basic residues</keyword>
<keyword id="KW-0903">Direct protein sequencing</keyword>
<keyword id="KW-0325">Glycoprotein</keyword>
<keyword id="KW-1185">Reference proteome</keyword>
<keyword id="KW-0677">Repeat</keyword>
<keyword id="KW-0964">Secreted</keyword>
<keyword id="KW-0732">Signal</keyword>
<gene>
    <name type="primary">CIS3</name>
    <name type="synonym">CCW11</name>
    <name type="synonym">CCW5</name>
    <name type="synonym">PIR4</name>
    <name type="synonym">SCW8</name>
    <name type="ordered locus">YJL158C</name>
    <name type="ORF">J0561</name>
</gene>
<accession>P47001</accession>
<accession>D6VW29</accession>
<proteinExistence type="evidence at protein level"/>
<feature type="signal peptide" evidence="4">
    <location>
        <begin position="1"/>
        <end position="21"/>
    </location>
</feature>
<feature type="propeptide" id="PRO_0000033258" evidence="4 6 7 12 15 16">
    <location>
        <begin position="22"/>
        <end position="64"/>
    </location>
</feature>
<feature type="chain" id="PRO_0000033259" description="Cell wall mannoprotein CIS3">
    <location>
        <begin position="65"/>
        <end position="227"/>
    </location>
</feature>
<feature type="repeat" description="PIR1/2/3">
    <location>
        <begin position="65"/>
        <end position="78"/>
    </location>
</feature>
<feature type="region of interest" description="Disordered" evidence="2">
    <location>
        <begin position="83"/>
        <end position="127"/>
    </location>
</feature>
<feature type="compositionally biased region" description="Low complexity" evidence="2">
    <location>
        <begin position="83"/>
        <end position="124"/>
    </location>
</feature>
<feature type="site" description="Cleavage; by KEX2">
    <location>
        <begin position="64"/>
        <end position="65"/>
    </location>
</feature>
<feature type="site" description="Covalent attachment to cell wall glycan">
    <location>
        <position position="74"/>
    </location>
</feature>
<feature type="glycosylation site" description="O-linked (Man) serine" evidence="12">
    <location>
        <position position="68"/>
    </location>
</feature>
<feature type="glycosylation site" description="O-linked (Man) threonine" evidence="12">
    <location>
        <position position="78"/>
    </location>
</feature>
<feature type="glycosylation site" description="O-linked (Man) serine" evidence="6">
    <location>
        <position position="105"/>
    </location>
</feature>
<feature type="glycosylation site" description="O-linked (Man) serine" evidence="6">
    <location>
        <position position="106"/>
    </location>
</feature>
<feature type="glycosylation site" description="O-linked (Man) serine" evidence="6">
    <location>
        <position position="107"/>
    </location>
</feature>
<feature type="glycosylation site" description="O-linked (Man) serine" evidence="6">
    <location>
        <position position="109"/>
    </location>
</feature>
<feature type="glycosylation site" description="O-linked (Man) threonine" evidence="6">
    <location>
        <position position="111"/>
    </location>
</feature>
<feature type="glycosylation site" description="O-linked (Man) serine" evidence="6">
    <location>
        <position position="112"/>
    </location>
</feature>
<feature type="glycosylation site" description="O-linked (Man) threonine" evidence="6">
    <location>
        <position position="113"/>
    </location>
</feature>
<feature type="glycosylation site" description="N-linked (GlcNAc...) asparagine" evidence="1">
    <location>
        <position position="114"/>
    </location>
</feature>
<feature type="glycosylation site" description="O-linked (Man) threonine" evidence="6">
    <location>
        <position position="116"/>
    </location>
</feature>
<feature type="glycosylation site" description="O-linked (Man) serine" evidence="6">
    <location>
        <position position="117"/>
    </location>
</feature>
<feature type="glycosylation site" description="O-linked (Man) serine" evidence="6">
    <location>
        <position position="118"/>
    </location>
</feature>
<feature type="mutagenesis site" description="Does not affect cell wall incorporation." evidence="12">
    <original>D</original>
    <variation>N</variation>
    <location>
        <position position="65"/>
    </location>
</feature>
<feature type="mutagenesis site" description="Does not affect cell wall incorporation." evidence="12">
    <original>S</original>
    <variation>A</variation>
    <location>
        <position position="68"/>
    </location>
</feature>
<feature type="mutagenesis site" description="Results in complete loss of cell wall incorporation." evidence="12">
    <original>Q</original>
    <variation>A</variation>
    <location>
        <position position="69"/>
    </location>
</feature>
<feature type="mutagenesis site" description="Results in complete loss of cell wall incorporation." evidence="12">
    <original>D</original>
    <variation>N</variation>
    <location>
        <position position="72"/>
    </location>
</feature>
<feature type="mutagenesis site" description="Results in complete loss of cell wall incorporation." evidence="12">
    <original>Q</original>
    <variation>A</variation>
    <location>
        <position position="74"/>
    </location>
</feature>
<feature type="mutagenesis site" description="Results in complete loss of cell wall incorporation." evidence="12">
    <original>Q</original>
    <variation>A</variation>
    <location>
        <position position="76"/>
    </location>
</feature>
<feature type="mutagenesis site" description="Does not affect cell wall incorporation." evidence="12">
    <original>T</original>
    <variation>A</variation>
    <location>
        <position position="78"/>
    </location>
</feature>
<feature type="mutagenesis site" description="Does not affect cell wall incorporation." evidence="12">
    <original>S</original>
    <variation>A</variation>
    <location>
        <position position="79"/>
    </location>
</feature>
<feature type="mutagenesis site" description="Does not affect cell wall incorporation." evidence="12">
    <original>T</original>
    <variation>A</variation>
    <location>
        <position position="82"/>
    </location>
</feature>
<feature type="mutagenesis site" description="Does not affect cell wall incorporation." evidence="7">
    <original>C</original>
    <variation>S</variation>
    <location>
        <position position="130"/>
    </location>
</feature>
<feature type="mutagenesis site" description="Results in the incorporation of KEX2-unprocessed precursor protein into the cell wall." evidence="7">
    <original>C</original>
    <variation>S</variation>
    <location>
        <position position="197"/>
    </location>
</feature>
<feature type="mutagenesis site" description="In PIR4t18; destabilizes the protein." evidence="7">
    <original>QNVAEQCSAIHLEAVSLVDC</original>
    <variation>LDC</variation>
    <location>
        <begin position="208"/>
        <end position="227"/>
    </location>
</feature>
<feature type="mutagenesis site" description="Does not affect cell wall incorporation." evidence="7">
    <location>
        <position position="227"/>
    </location>
</feature>
<feature type="sequence conflict" description="In Ref. 4; AA sequence." evidence="17" ref="4">
    <original>AA</original>
    <variation>SS</variation>
    <location>
        <begin position="43"/>
        <end position="44"/>
    </location>
</feature>
<feature type="sequence conflict" description="In Ref. 6; AA sequence." evidence="17" ref="6">
    <original>S</original>
    <variation>T</variation>
    <location>
        <position position="68"/>
    </location>
</feature>
<feature type="sequence conflict" description="In Ref. 4; AA sequence." evidence="17" ref="4">
    <original>S</original>
    <variation>E</variation>
    <location>
        <position position="88"/>
    </location>
</feature>
<sequence length="227" mass="23242">MQFKNVALAASVAALSATASAEGYTPGEPWSTLTPTGSISCGAAEYTTTFGIAVQAITSSKAKRDVISQIGDGQVQATSAATAQATDSQAQATTTATPTSSEKISSSASKTSTNATSSSCATPSLKDSSCKNSGTLELTLKDGVLTDAKGRIGSIVANRQFQFDGPPPQAGAIYAAGWSITEDGYLALGDSDVFYQCLSGNFYNLYDQNVAEQCSAIHLEAVSLVDC</sequence>
<protein>
    <recommendedName>
        <fullName>Cell wall mannoprotein CIS3</fullName>
    </recommendedName>
    <alternativeName>
        <fullName>Covalently-linked cell wall protein 5/11</fullName>
    </alternativeName>
    <alternativeName>
        <fullName>Protein with internal repeats 4</fullName>
    </alternativeName>
    <alternativeName>
        <fullName>Soluble cell wall protein 8</fullName>
    </alternativeName>
</protein>
<organism>
    <name type="scientific">Saccharomyces cerevisiae (strain ATCC 204508 / S288c)</name>
    <name type="common">Baker's yeast</name>
    <dbReference type="NCBI Taxonomy" id="559292"/>
    <lineage>
        <taxon>Eukaryota</taxon>
        <taxon>Fungi</taxon>
        <taxon>Dikarya</taxon>
        <taxon>Ascomycota</taxon>
        <taxon>Saccharomycotina</taxon>
        <taxon>Saccharomycetes</taxon>
        <taxon>Saccharomycetales</taxon>
        <taxon>Saccharomycetaceae</taxon>
        <taxon>Saccharomyces</taxon>
    </lineage>
</organism>
<evidence type="ECO:0000255" key="1"/>
<evidence type="ECO:0000256" key="2">
    <source>
        <dbReference type="SAM" id="MobiDB-lite"/>
    </source>
</evidence>
<evidence type="ECO:0000269" key="3">
    <source>
    </source>
</evidence>
<evidence type="ECO:0000269" key="4">
    <source>
    </source>
</evidence>
<evidence type="ECO:0000269" key="5">
    <source>
    </source>
</evidence>
<evidence type="ECO:0000269" key="6">
    <source>
    </source>
</evidence>
<evidence type="ECO:0000269" key="7">
    <source>
    </source>
</evidence>
<evidence type="ECO:0000269" key="8">
    <source>
    </source>
</evidence>
<evidence type="ECO:0000269" key="9">
    <source>
    </source>
</evidence>
<evidence type="ECO:0000269" key="10">
    <source>
    </source>
</evidence>
<evidence type="ECO:0000269" key="11">
    <source>
    </source>
</evidence>
<evidence type="ECO:0000269" key="12">
    <source>
    </source>
</evidence>
<evidence type="ECO:0000269" key="13">
    <source>
    </source>
</evidence>
<evidence type="ECO:0000269" key="14">
    <source>
    </source>
</evidence>
<evidence type="ECO:0000269" key="15">
    <source>
    </source>
</evidence>
<evidence type="ECO:0000269" key="16">
    <source>
    </source>
</evidence>
<evidence type="ECO:0000305" key="17"/>
<reference key="1">
    <citation type="journal article" date="1996" name="EMBO J.">
        <title>Complete nucleotide sequence of Saccharomyces cerevisiae chromosome X.</title>
        <authorList>
            <person name="Galibert F."/>
            <person name="Alexandraki D."/>
            <person name="Baur A."/>
            <person name="Boles E."/>
            <person name="Chalwatzis N."/>
            <person name="Chuat J.-C."/>
            <person name="Coster F."/>
            <person name="Cziepluch C."/>
            <person name="de Haan M."/>
            <person name="Domdey H."/>
            <person name="Durand P."/>
            <person name="Entian K.-D."/>
            <person name="Gatius M."/>
            <person name="Goffeau A."/>
            <person name="Grivell L.A."/>
            <person name="Hennemann A."/>
            <person name="Herbert C.J."/>
            <person name="Heumann K."/>
            <person name="Hilger F."/>
            <person name="Hollenberg C.P."/>
            <person name="Huang M.-E."/>
            <person name="Jacq C."/>
            <person name="Jauniaux J.-C."/>
            <person name="Katsoulou C."/>
            <person name="Kirchrath L."/>
            <person name="Kleine K."/>
            <person name="Kordes E."/>
            <person name="Koetter P."/>
            <person name="Liebl S."/>
            <person name="Louis E.J."/>
            <person name="Manus V."/>
            <person name="Mewes H.-W."/>
            <person name="Miosga T."/>
            <person name="Obermaier B."/>
            <person name="Perea J."/>
            <person name="Pohl T.M."/>
            <person name="Portetelle D."/>
            <person name="Pujol A."/>
            <person name="Purnelle B."/>
            <person name="Ramezani Rad M."/>
            <person name="Rasmussen S.W."/>
            <person name="Rose M."/>
            <person name="Rossau R."/>
            <person name="Schaaff-Gerstenschlaeger I."/>
            <person name="Smits P.H.M."/>
            <person name="Scarcez T."/>
            <person name="Soriano N."/>
            <person name="To Van D."/>
            <person name="Tzermia M."/>
            <person name="Van Broekhoven A."/>
            <person name="Vandenbol M."/>
            <person name="Wedler H."/>
            <person name="von Wettstein D."/>
            <person name="Wambutt R."/>
            <person name="Zagulski M."/>
            <person name="Zollner A."/>
            <person name="Karpfinger-Hartl L."/>
        </authorList>
    </citation>
    <scope>NUCLEOTIDE SEQUENCE [LARGE SCALE GENOMIC DNA]</scope>
    <source>
        <strain>ATCC 204508 / S288c</strain>
    </source>
</reference>
<reference key="2">
    <citation type="journal article" date="2014" name="G3 (Bethesda)">
        <title>The reference genome sequence of Saccharomyces cerevisiae: Then and now.</title>
        <authorList>
            <person name="Engel S.R."/>
            <person name="Dietrich F.S."/>
            <person name="Fisk D.G."/>
            <person name="Binkley G."/>
            <person name="Balakrishnan R."/>
            <person name="Costanzo M.C."/>
            <person name="Dwight S.S."/>
            <person name="Hitz B.C."/>
            <person name="Karra K."/>
            <person name="Nash R.S."/>
            <person name="Weng S."/>
            <person name="Wong E.D."/>
            <person name="Lloyd P."/>
            <person name="Skrzypek M.S."/>
            <person name="Miyasato S.R."/>
            <person name="Simison M."/>
            <person name="Cherry J.M."/>
        </authorList>
    </citation>
    <scope>GENOME REANNOTATION</scope>
    <source>
        <strain>ATCC 204508 / S288c</strain>
    </source>
</reference>
<reference key="3">
    <citation type="journal article" date="2007" name="Genome Res.">
        <title>Approaching a complete repository of sequence-verified protein-encoding clones for Saccharomyces cerevisiae.</title>
        <authorList>
            <person name="Hu Y."/>
            <person name="Rolfs A."/>
            <person name="Bhullar B."/>
            <person name="Murthy T.V.S."/>
            <person name="Zhu C."/>
            <person name="Berger M.F."/>
            <person name="Camargo A.A."/>
            <person name="Kelley F."/>
            <person name="McCarron S."/>
            <person name="Jepson D."/>
            <person name="Richardson A."/>
            <person name="Raphael J."/>
            <person name="Moreira D."/>
            <person name="Taycher E."/>
            <person name="Zuo D."/>
            <person name="Mohr S."/>
            <person name="Kane M.F."/>
            <person name="Williamson J."/>
            <person name="Simpson A.J.G."/>
            <person name="Bulyk M.L."/>
            <person name="Harlow E."/>
            <person name="Marsischky G."/>
            <person name="Kolodner R.D."/>
            <person name="LaBaer J."/>
        </authorList>
    </citation>
    <scope>NUCLEOTIDE SEQUENCE [GENOMIC DNA]</scope>
    <source>
        <strain>ATCC 204508 / S288c</strain>
    </source>
</reference>
<reference key="4">
    <citation type="journal article" date="1999" name="J. Bacteriol.">
        <title>Identification of two mannoproteins released from cell walls of a Saccharomyces cerevisiae mnn1 mnn9 double mutant by reducing agents.</title>
        <authorList>
            <person name="Moukadiri I."/>
            <person name="Jaafar L."/>
            <person name="Zueco J."/>
        </authorList>
    </citation>
    <scope>PROTEIN SEQUENCE OF 22-47 AND 65-89</scope>
    <scope>CLEAVAGE BY KEX2</scope>
    <scope>SUBCELLULAR LOCATION</scope>
</reference>
<reference key="5">
    <citation type="journal article" date="2003" name="EMBO Rep.">
        <title>O-mannosylation precedes and potentially controls the N-glycosylation of a yeast cell wall glycoprotein.</title>
        <authorList>
            <person name="Ecker M."/>
            <person name="Mrsa V."/>
            <person name="Hagen I."/>
            <person name="Deutzmann R."/>
            <person name="Strahl S."/>
            <person name="Tanner W."/>
        </authorList>
    </citation>
    <scope>PROTEIN SEQUENCE OF 65-118</scope>
    <scope>GLYCOSYLATION AT SER-105; SER-106; SER-107; SER-109; THR-111; SER-112; THR-113; THR-116; SER-117 AND SER-118</scope>
</reference>
<reference key="6">
    <citation type="journal article" date="1997" name="Yeast">
        <title>Specific labelling of cell wall proteins by biotinylation. Identification of four covalently linked O-mannosylated proteins of Saccharomyces cerevisiae.</title>
        <authorList>
            <person name="Mrsa V."/>
            <person name="Seidl T."/>
            <person name="Gentzsch M."/>
            <person name="Tanner W."/>
        </authorList>
    </citation>
    <scope>PROTEIN SEQUENCE OF 65-77</scope>
    <scope>GLYCOSYLATION</scope>
    <scope>SUBCELLULAR LOCATION</scope>
</reference>
<reference key="7">
    <citation type="journal article" date="2003" name="Yeast">
        <title>Functional analysis of the cysteine residues and the repetitive sequence of Saccharomyces cerevisiae Pir4/Cis3: the repetitive sequence is needed for binding to the cell wall beta-1,3-glucan.</title>
        <authorList>
            <person name="Castillo L."/>
            <person name="Martinez A.I."/>
            <person name="Garcera A."/>
            <person name="Elorza M.V."/>
            <person name="Valentin E."/>
            <person name="Sentandreu R."/>
        </authorList>
    </citation>
    <scope>PROTEIN SEQUENCE OF 65-77</scope>
    <scope>MUTAGENESIS OF CYS-130; CYS-197; 208-GLN--CYS-227 AND CYS-227</scope>
    <scope>SUBCELLULAR LOCATION</scope>
</reference>
<reference key="8">
    <citation type="journal article" date="2006" name="J. Biol. Chem.">
        <title>Pir proteins of Saccharomyces cerevisiae are attached to beta-1,3-glucan by a new protein-carbohydrate linkage.</title>
        <authorList>
            <person name="Ecker M."/>
            <person name="Deutzmann R."/>
            <person name="Lehle L."/>
            <person name="Mrsa V."/>
            <person name="Tanner W."/>
        </authorList>
    </citation>
    <scope>PROTEIN SEQUENCE OF 65-77</scope>
    <scope>GLYCOSYLATION AT SER-68 AND THR-78</scope>
    <scope>MUTAGENESIS OF ASP-65; SER-68; GLN-69; ASP-72; GLN-74; GLN-76; THR-78; SER-79 AND THR-82</scope>
    <scope>CELL WALL ATTACHMENT SITE</scope>
    <scope>IDENTIFICATION BY MASS SPECTROMETRY</scope>
</reference>
<reference key="9">
    <citation type="journal article" date="1998" name="J. Bacteriol.">
        <title>New potential cell wall glucanases of Saccharomyces cerevisiae and their involvement in mating.</title>
        <authorList>
            <person name="Cappellaro C."/>
            <person name="Mrsa V."/>
            <person name="Tanner W."/>
        </authorList>
    </citation>
    <scope>PROTEIN SEQUENCE OF 65-75</scope>
    <scope>SUBCELLULAR LOCATION</scope>
    <source>
        <strain>ATCC 96099 / S288c / SEY6210</strain>
    </source>
</reference>
<reference key="10">
    <citation type="journal article" date="1999" name="Mol. Microbiol.">
        <title>Genome-wide analysis of gene expression regulated by the yeast cell wall integrity signalling pathway.</title>
        <authorList>
            <person name="Jung U.S."/>
            <person name="Levin D.E."/>
        </authorList>
    </citation>
    <scope>INDUCTION</scope>
</reference>
<reference key="11">
    <citation type="journal article" date="1999" name="Yeast">
        <title>Role of NaOH-extractable cell wall proteins Ccw5p, Ccw6p, Ccw7p and Ccw8p (members of the Pir protein family) in stability of the Saccharomyces cerevisiae cell wall.</title>
        <authorList>
            <person name="Mrsa V."/>
            <person name="Tanner W."/>
        </authorList>
    </citation>
    <scope>FUNCTION</scope>
</reference>
<reference key="12">
    <citation type="journal article" date="2004" name="Microbiology">
        <title>Increased mortality of Saccharomyces cerevisiae cell wall protein mutants.</title>
        <authorList>
            <person name="Teparic R."/>
            <person name="Stuparevic I."/>
            <person name="Mrsa V."/>
        </authorList>
    </citation>
    <scope>FUNCTION</scope>
</reference>
<reference key="13">
    <citation type="journal article" date="2004" name="Yeast">
        <title>Characterization of the transcriptional response to cell wall stress in Saccharomyces cerevisiae.</title>
        <authorList>
            <person name="Boorsma A."/>
            <person name="de Nobel H."/>
            <person name="ter Riet B."/>
            <person name="Bargmann B."/>
            <person name="Brul S."/>
            <person name="Hellingwerf K.J."/>
            <person name="Klis F.M."/>
        </authorList>
    </citation>
    <scope>INDUCTION</scope>
</reference>
<reference key="14">
    <citation type="journal article" date="2005" name="J. Biol. Chem.">
        <title>Comprehensive proteomic analysis of Saccharomyces cerevisiae cell walls: identification of proteins covalently attached via glycosylphosphatidylinositol remnants or mild alkali-sensitive linkages.</title>
        <authorList>
            <person name="Yin Q.Y."/>
            <person name="de Groot P.W.J."/>
            <person name="Dekker H.L."/>
            <person name="de Jong L."/>
            <person name="Klis F.M."/>
            <person name="de Koster C.G."/>
        </authorList>
    </citation>
    <scope>SUBCELLULAR LOCATION</scope>
    <scope>IDENTIFICATION BY MASS SPECTROMETRY</scope>
</reference>
<reference key="15">
    <citation type="journal article" date="2003" name="Nature">
        <title>Global analysis of protein expression in yeast.</title>
        <authorList>
            <person name="Ghaemmaghami S."/>
            <person name="Huh W.-K."/>
            <person name="Bower K."/>
            <person name="Howson R.W."/>
            <person name="Belle A."/>
            <person name="Dephoure N."/>
            <person name="O'Shea E.K."/>
            <person name="Weissman J.S."/>
        </authorList>
    </citation>
    <scope>LEVEL OF PROTEIN EXPRESSION [LARGE SCALE ANALYSIS]</scope>
</reference>
<reference key="16">
    <citation type="journal article" date="2007" name="FEMS Yeast Res.">
        <title>Mass spectrometric quantitation of covalently bound cell wall proteins in Saccharomyces cerevisiae.</title>
        <authorList>
            <person name="Yin Q.Y."/>
            <person name="de Groot P.W.J."/>
            <person name="de Jong L."/>
            <person name="Klis F.M."/>
            <person name="de Koster C.G."/>
        </authorList>
    </citation>
    <scope>INDUCTION</scope>
</reference>
<reference key="17">
    <citation type="journal article" date="2009" name="Mol. Syst. Biol.">
        <title>Global analysis of the glycoproteome in Saccharomyces cerevisiae reveals new roles for protein glycosylation in eukaryotes.</title>
        <authorList>
            <person name="Kung L.A."/>
            <person name="Tao S.-C."/>
            <person name="Qian J."/>
            <person name="Smith M.G."/>
            <person name="Snyder M."/>
            <person name="Zhu H."/>
        </authorList>
    </citation>
    <scope>GLYCOSYLATION [LARGE SCALE ANALYSIS]</scope>
</reference>
<dbReference type="EMBL" id="Z49433">
    <property type="protein sequence ID" value="CAA89453.1"/>
    <property type="molecule type" value="Genomic_DNA"/>
</dbReference>
<dbReference type="EMBL" id="AY693027">
    <property type="protein sequence ID" value="AAT93046.1"/>
    <property type="molecule type" value="Genomic_DNA"/>
</dbReference>
<dbReference type="EMBL" id="BK006943">
    <property type="protein sequence ID" value="DAA08645.1"/>
    <property type="molecule type" value="Genomic_DNA"/>
</dbReference>
<dbReference type="PIR" id="S56941">
    <property type="entry name" value="S56941"/>
</dbReference>
<dbReference type="RefSeq" id="NP_012377.1">
    <property type="nucleotide sequence ID" value="NM_001181591.1"/>
</dbReference>
<dbReference type="BioGRID" id="33602">
    <property type="interactions" value="99"/>
</dbReference>
<dbReference type="DIP" id="DIP-4788N"/>
<dbReference type="ELM" id="P47001"/>
<dbReference type="FunCoup" id="P47001">
    <property type="interactions" value="92"/>
</dbReference>
<dbReference type="IntAct" id="P47001">
    <property type="interactions" value="1"/>
</dbReference>
<dbReference type="STRING" id="4932.YJL158C"/>
<dbReference type="GlyCosmos" id="P47001">
    <property type="glycosylation" value="13 sites, No reported glycans"/>
</dbReference>
<dbReference type="GlyGen" id="P47001">
    <property type="glycosylation" value="14 sites"/>
</dbReference>
<dbReference type="iPTMnet" id="P47001"/>
<dbReference type="PaxDb" id="4932-YJL158C"/>
<dbReference type="PeptideAtlas" id="P47001"/>
<dbReference type="EnsemblFungi" id="YJL158C_mRNA">
    <property type="protein sequence ID" value="YJL158C"/>
    <property type="gene ID" value="YJL158C"/>
</dbReference>
<dbReference type="GeneID" id="853282"/>
<dbReference type="KEGG" id="sce:YJL158C"/>
<dbReference type="AGR" id="SGD:S000003694"/>
<dbReference type="SGD" id="S000003694">
    <property type="gene designation" value="CIS3"/>
</dbReference>
<dbReference type="VEuPathDB" id="FungiDB:YJL158C"/>
<dbReference type="eggNOG" id="ENOG502RKR1">
    <property type="taxonomic scope" value="Eukaryota"/>
</dbReference>
<dbReference type="GeneTree" id="ENSGT00940000176741"/>
<dbReference type="HOGENOM" id="CLU_039662_2_0_1"/>
<dbReference type="InParanoid" id="P47001"/>
<dbReference type="OMA" id="NTMWSNN"/>
<dbReference type="OrthoDB" id="5415592at2759"/>
<dbReference type="BioCyc" id="YEAST:G3O-31598-MONOMER"/>
<dbReference type="BioGRID-ORCS" id="853282">
    <property type="hits" value="5 hits in 10 CRISPR screens"/>
</dbReference>
<dbReference type="PRO" id="PR:P47001"/>
<dbReference type="Proteomes" id="UP000002311">
    <property type="component" value="Chromosome X"/>
</dbReference>
<dbReference type="RNAct" id="P47001">
    <property type="molecule type" value="protein"/>
</dbReference>
<dbReference type="GO" id="GO:0071944">
    <property type="term" value="C:cell periphery"/>
    <property type="evidence" value="ECO:0007005"/>
    <property type="project" value="SGD"/>
</dbReference>
<dbReference type="GO" id="GO:0005934">
    <property type="term" value="C:cellular bud tip"/>
    <property type="evidence" value="ECO:0000314"/>
    <property type="project" value="SGD"/>
</dbReference>
<dbReference type="GO" id="GO:0005783">
    <property type="term" value="C:endoplasmic reticulum"/>
    <property type="evidence" value="ECO:0007005"/>
    <property type="project" value="SGD"/>
</dbReference>
<dbReference type="GO" id="GO:0005576">
    <property type="term" value="C:extracellular region"/>
    <property type="evidence" value="ECO:0000314"/>
    <property type="project" value="SGD"/>
</dbReference>
<dbReference type="GO" id="GO:0009277">
    <property type="term" value="C:fungal-type cell wall"/>
    <property type="evidence" value="ECO:0000314"/>
    <property type="project" value="SGD"/>
</dbReference>
<dbReference type="GO" id="GO:0000324">
    <property type="term" value="C:fungal-type vacuole"/>
    <property type="evidence" value="ECO:0007005"/>
    <property type="project" value="SGD"/>
</dbReference>
<dbReference type="GO" id="GO:0005886">
    <property type="term" value="C:plasma membrane"/>
    <property type="evidence" value="ECO:0007005"/>
    <property type="project" value="SGD"/>
</dbReference>
<dbReference type="GO" id="GO:0005199">
    <property type="term" value="F:structural constituent of cell wall"/>
    <property type="evidence" value="ECO:0000250"/>
    <property type="project" value="SGD"/>
</dbReference>
<dbReference type="GO" id="GO:0031505">
    <property type="term" value="P:fungal-type cell wall organization"/>
    <property type="evidence" value="ECO:0000315"/>
    <property type="project" value="SGD"/>
</dbReference>
<dbReference type="InterPro" id="IPR054508">
    <property type="entry name" value="PIR1-like_C"/>
</dbReference>
<dbReference type="InterPro" id="IPR051153">
    <property type="entry name" value="Yeast_CWMannoprotein_PIR"/>
</dbReference>
<dbReference type="InterPro" id="IPR000420">
    <property type="entry name" value="Yeast_PIR_rpt"/>
</dbReference>
<dbReference type="PANTHER" id="PTHR47254">
    <property type="entry name" value="CELL WALL MANNOPROTEIN CIS3-RELATED"/>
    <property type="match status" value="1"/>
</dbReference>
<dbReference type="PANTHER" id="PTHR47254:SF1">
    <property type="entry name" value="CELL WALL MANNOPROTEIN CIS3-RELATED"/>
    <property type="match status" value="1"/>
</dbReference>
<dbReference type="Pfam" id="PF00399">
    <property type="entry name" value="PIR"/>
    <property type="match status" value="1"/>
</dbReference>
<dbReference type="Pfam" id="PF22799">
    <property type="entry name" value="PIR1-like_C"/>
    <property type="match status" value="1"/>
</dbReference>
<dbReference type="PROSITE" id="PS00929">
    <property type="entry name" value="PIR_REPEAT_1"/>
    <property type="match status" value="1"/>
</dbReference>
<dbReference type="PROSITE" id="PS50256">
    <property type="entry name" value="PIR_REPEAT_2"/>
    <property type="match status" value="1"/>
</dbReference>